<organism>
    <name type="scientific">Salmonella agona (strain SL483)</name>
    <dbReference type="NCBI Taxonomy" id="454166"/>
    <lineage>
        <taxon>Bacteria</taxon>
        <taxon>Pseudomonadati</taxon>
        <taxon>Pseudomonadota</taxon>
        <taxon>Gammaproteobacteria</taxon>
        <taxon>Enterobacterales</taxon>
        <taxon>Enterobacteriaceae</taxon>
        <taxon>Salmonella</taxon>
    </lineage>
</organism>
<proteinExistence type="inferred from homology"/>
<gene>
    <name evidence="1" type="primary">malT</name>
    <name type="ordered locus">SeAg_B3717</name>
</gene>
<evidence type="ECO:0000255" key="1">
    <source>
        <dbReference type="HAMAP-Rule" id="MF_01247"/>
    </source>
</evidence>
<sequence length="901" mass="103016">MLIPSKLSRPVRLDHTVVRERLLAKLSGANNFRLALVTSPAGYGKTTLVSQWAAGKNELGWYSLDEGDNQQERFASYLIAAIQQATGGHCSTSEAMAQKRQYASLTSLFAQLFIELAQWHRPLYLVIDDYHLITNPVIHDAMRFFLRHQPENFTLVVLSRNLPQLGIANLRVRDQLLEIGSQQLAFNHQEAKQFFDRRLSSPIEAAESSRMCDDVAGWATALQLIALSARQNHTSAHHSARRLAGINASHLSDYLVDEVLDNVDVSTRHFLLKSAILRSMNDALIVRVTGEENGQMRLEEIERQGLFLQRMDDTGEWFSYHPLFGSFLRQRCQWELAAELPEIHRAAAESWMEQGFPSEAIHHALAAGDAQMLRDILLNHAWGLFNHSELALLEESLKALPWESLLENPRLVLLQAWLMQSQHRYSEVNTLLARAEQEIKGVMDGTLHAEFNALRAQVAINDGNPEEAERLAKLALDELPLAWFYSRIVATSVHGEVLHCKGDLSQSLSLMQQTEQMARHHDVWHYALWSLIQQSEIQFAQGFLQAAWETQERAFQLIKEQHLEQLPMHEFLVRIRAQLLWAWARLDEAEASARSGIAVLSTFQPQQQLQCLTLLVQCSLARGDLDNARSQLNRLENLLGNGRYHCDWISNADKVRVIYWQLTGDKKSAANWLRHTPKPAFANNHFLQGQWRNIARAQILLGEFEPAEIVLEELNENARSLRLMSDLNRNLLLLNQLYWQSGRKNDAQRVLLDALQLANRTGFISHFVIEGEAMAQQLRQLIQLNTLPEMEQHRAQRILREINQHHRHKFAHFDEGFVERLLNHPDVPELIRTSPLTQREWQVLGLIYSGYSNEQIAGELAVAATTIKTHIRNLYQKLGVAHRQDAVQHAQQLLKMMGYGV</sequence>
<protein>
    <recommendedName>
        <fullName evidence="1">HTH-type transcriptional regulator MalT</fullName>
    </recommendedName>
    <alternativeName>
        <fullName evidence="1">ATP-dependent transcriptional activator MalT</fullName>
    </alternativeName>
</protein>
<accession>B5F8N2</accession>
<reference key="1">
    <citation type="journal article" date="2011" name="J. Bacteriol.">
        <title>Comparative genomics of 28 Salmonella enterica isolates: evidence for CRISPR-mediated adaptive sublineage evolution.</title>
        <authorList>
            <person name="Fricke W.F."/>
            <person name="Mammel M.K."/>
            <person name="McDermott P.F."/>
            <person name="Tartera C."/>
            <person name="White D.G."/>
            <person name="Leclerc J.E."/>
            <person name="Ravel J."/>
            <person name="Cebula T.A."/>
        </authorList>
    </citation>
    <scope>NUCLEOTIDE SEQUENCE [LARGE SCALE GENOMIC DNA]</scope>
    <source>
        <strain>SL483</strain>
    </source>
</reference>
<feature type="chain" id="PRO_1000139853" description="HTH-type transcriptional regulator MalT">
    <location>
        <begin position="1"/>
        <end position="901"/>
    </location>
</feature>
<feature type="domain" description="HTH luxR-type" evidence="1">
    <location>
        <begin position="829"/>
        <end position="894"/>
    </location>
</feature>
<feature type="DNA-binding region" description="H-T-H motif" evidence="1">
    <location>
        <begin position="853"/>
        <end position="872"/>
    </location>
</feature>
<feature type="binding site" evidence="1">
    <location>
        <begin position="39"/>
        <end position="46"/>
    </location>
    <ligand>
        <name>ATP</name>
        <dbReference type="ChEBI" id="CHEBI:30616"/>
    </ligand>
</feature>
<keyword id="KW-0010">Activator</keyword>
<keyword id="KW-0067">ATP-binding</keyword>
<keyword id="KW-0119">Carbohydrate metabolism</keyword>
<keyword id="KW-0238">DNA-binding</keyword>
<keyword id="KW-0547">Nucleotide-binding</keyword>
<keyword id="KW-0804">Transcription</keyword>
<keyword id="KW-0805">Transcription regulation</keyword>
<comment type="function">
    <text evidence="1">Positively regulates the transcription of the maltose regulon whose gene products are responsible for uptake and catabolism of malto-oligosaccharides. Specifically binds to the promoter region of its target genes, recognizing a short DNA motif called the MalT box.</text>
</comment>
<comment type="activity regulation">
    <text evidence="1">Activated by ATP and maltotriose, which are both required for DNA binding.</text>
</comment>
<comment type="subunit">
    <text evidence="1">Monomer in solution. Oligomerizes to an active state in the presence of the positive effectors ATP and maltotriose.</text>
</comment>
<comment type="similarity">
    <text evidence="1">Belongs to the MalT family.</text>
</comment>
<name>MALT_SALA4</name>
<dbReference type="EMBL" id="CP001138">
    <property type="protein sequence ID" value="ACH50544.1"/>
    <property type="molecule type" value="Genomic_DNA"/>
</dbReference>
<dbReference type="RefSeq" id="WP_000907030.1">
    <property type="nucleotide sequence ID" value="NC_011149.1"/>
</dbReference>
<dbReference type="SMR" id="B5F8N2"/>
<dbReference type="KEGG" id="sea:SeAg_B3717"/>
<dbReference type="HOGENOM" id="CLU_006325_3_0_6"/>
<dbReference type="Proteomes" id="UP000008819">
    <property type="component" value="Chromosome"/>
</dbReference>
<dbReference type="GO" id="GO:0005524">
    <property type="term" value="F:ATP binding"/>
    <property type="evidence" value="ECO:0007669"/>
    <property type="project" value="UniProtKB-UniRule"/>
</dbReference>
<dbReference type="GO" id="GO:0003677">
    <property type="term" value="F:DNA binding"/>
    <property type="evidence" value="ECO:0007669"/>
    <property type="project" value="UniProtKB-KW"/>
</dbReference>
<dbReference type="GO" id="GO:0003700">
    <property type="term" value="F:DNA-binding transcription factor activity"/>
    <property type="evidence" value="ECO:0007669"/>
    <property type="project" value="UniProtKB-UniRule"/>
</dbReference>
<dbReference type="GO" id="GO:0045913">
    <property type="term" value="P:positive regulation of carbohydrate metabolic process"/>
    <property type="evidence" value="ECO:0007669"/>
    <property type="project" value="UniProtKB-UniRule"/>
</dbReference>
<dbReference type="GO" id="GO:0045893">
    <property type="term" value="P:positive regulation of DNA-templated transcription"/>
    <property type="evidence" value="ECO:0007669"/>
    <property type="project" value="UniProtKB-UniRule"/>
</dbReference>
<dbReference type="CDD" id="cd06170">
    <property type="entry name" value="LuxR_C_like"/>
    <property type="match status" value="1"/>
</dbReference>
<dbReference type="FunFam" id="1.10.10.10:FF:000115">
    <property type="entry name" value="HTH-type transcriptional regulator MalT"/>
    <property type="match status" value="1"/>
</dbReference>
<dbReference type="Gene3D" id="1.25.40.10">
    <property type="entry name" value="Tetratricopeptide repeat domain"/>
    <property type="match status" value="1"/>
</dbReference>
<dbReference type="Gene3D" id="1.10.10.10">
    <property type="entry name" value="Winged helix-like DNA-binding domain superfamily/Winged helix DNA-binding domain"/>
    <property type="match status" value="1"/>
</dbReference>
<dbReference type="HAMAP" id="MF_01247">
    <property type="entry name" value="HTH_type_MalT"/>
    <property type="match status" value="1"/>
</dbReference>
<dbReference type="InterPro" id="IPR027417">
    <property type="entry name" value="P-loop_NTPase"/>
</dbReference>
<dbReference type="InterPro" id="IPR016032">
    <property type="entry name" value="Sig_transdc_resp-reg_C-effctor"/>
</dbReference>
<dbReference type="InterPro" id="IPR011990">
    <property type="entry name" value="TPR-like_helical_dom_sf"/>
</dbReference>
<dbReference type="InterPro" id="IPR041617">
    <property type="entry name" value="TPR_MalT"/>
</dbReference>
<dbReference type="InterPro" id="IPR023768">
    <property type="entry name" value="Tscrpt_reg_HTH_MalT"/>
</dbReference>
<dbReference type="InterPro" id="IPR000792">
    <property type="entry name" value="Tscrpt_reg_LuxR_C"/>
</dbReference>
<dbReference type="InterPro" id="IPR036388">
    <property type="entry name" value="WH-like_DNA-bd_sf"/>
</dbReference>
<dbReference type="NCBIfam" id="NF003420">
    <property type="entry name" value="PRK04841.1"/>
    <property type="match status" value="1"/>
</dbReference>
<dbReference type="PANTHER" id="PTHR44688">
    <property type="entry name" value="DNA-BINDING TRANSCRIPTIONAL ACTIVATOR DEVR_DOSR"/>
    <property type="match status" value="1"/>
</dbReference>
<dbReference type="PANTHER" id="PTHR44688:SF16">
    <property type="entry name" value="DNA-BINDING TRANSCRIPTIONAL ACTIVATOR DEVR_DOSR"/>
    <property type="match status" value="1"/>
</dbReference>
<dbReference type="Pfam" id="PF00196">
    <property type="entry name" value="GerE"/>
    <property type="match status" value="1"/>
</dbReference>
<dbReference type="Pfam" id="PF17874">
    <property type="entry name" value="TPR_MalT"/>
    <property type="match status" value="1"/>
</dbReference>
<dbReference type="PRINTS" id="PR00038">
    <property type="entry name" value="HTHLUXR"/>
</dbReference>
<dbReference type="SMART" id="SM00421">
    <property type="entry name" value="HTH_LUXR"/>
    <property type="match status" value="1"/>
</dbReference>
<dbReference type="SUPFAM" id="SSF46894">
    <property type="entry name" value="C-terminal effector domain of the bipartite response regulators"/>
    <property type="match status" value="1"/>
</dbReference>
<dbReference type="SUPFAM" id="SSF52540">
    <property type="entry name" value="P-loop containing nucleoside triphosphate hydrolases"/>
    <property type="match status" value="1"/>
</dbReference>
<dbReference type="SUPFAM" id="SSF48452">
    <property type="entry name" value="TPR-like"/>
    <property type="match status" value="1"/>
</dbReference>
<dbReference type="PROSITE" id="PS00622">
    <property type="entry name" value="HTH_LUXR_1"/>
    <property type="match status" value="1"/>
</dbReference>
<dbReference type="PROSITE" id="PS50043">
    <property type="entry name" value="HTH_LUXR_2"/>
    <property type="match status" value="1"/>
</dbReference>